<name>Y1598_NEIG1</name>
<organism>
    <name type="scientific">Neisseria gonorrhoeae (strain ATCC 700825 / FA 1090)</name>
    <dbReference type="NCBI Taxonomy" id="242231"/>
    <lineage>
        <taxon>Bacteria</taxon>
        <taxon>Pseudomonadati</taxon>
        <taxon>Pseudomonadota</taxon>
        <taxon>Betaproteobacteria</taxon>
        <taxon>Neisseriales</taxon>
        <taxon>Neisseriaceae</taxon>
        <taxon>Neisseria</taxon>
    </lineage>
</organism>
<accession>Q5F6G1</accession>
<dbReference type="EMBL" id="AE004969">
    <property type="protein sequence ID" value="AAW90226.1"/>
    <property type="molecule type" value="Genomic_DNA"/>
</dbReference>
<dbReference type="RefSeq" id="WP_003693497.1">
    <property type="nucleotide sequence ID" value="NC_002946.2"/>
</dbReference>
<dbReference type="RefSeq" id="YP_208638.1">
    <property type="nucleotide sequence ID" value="NC_002946.2"/>
</dbReference>
<dbReference type="SMR" id="Q5F6G1"/>
<dbReference type="STRING" id="242231.NGO_1598"/>
<dbReference type="KEGG" id="ngo:NGO_1598"/>
<dbReference type="PATRIC" id="fig|242231.10.peg.1912"/>
<dbReference type="HOGENOM" id="CLU_135650_0_2_4"/>
<dbReference type="Proteomes" id="UP000000535">
    <property type="component" value="Chromosome"/>
</dbReference>
<dbReference type="CDD" id="cd10456">
    <property type="entry name" value="GIY-YIG_UPF0213"/>
    <property type="match status" value="1"/>
</dbReference>
<dbReference type="Gene3D" id="3.40.1440.10">
    <property type="entry name" value="GIY-YIG endonuclease"/>
    <property type="match status" value="1"/>
</dbReference>
<dbReference type="InterPro" id="IPR000305">
    <property type="entry name" value="GIY-YIG_endonuc"/>
</dbReference>
<dbReference type="InterPro" id="IPR035901">
    <property type="entry name" value="GIY-YIG_endonuc_sf"/>
</dbReference>
<dbReference type="InterPro" id="IPR050190">
    <property type="entry name" value="UPF0213_domain"/>
</dbReference>
<dbReference type="PANTHER" id="PTHR34477">
    <property type="entry name" value="UPF0213 PROTEIN YHBQ"/>
    <property type="match status" value="1"/>
</dbReference>
<dbReference type="PANTHER" id="PTHR34477:SF1">
    <property type="entry name" value="UPF0213 PROTEIN YHBQ"/>
    <property type="match status" value="1"/>
</dbReference>
<dbReference type="Pfam" id="PF01541">
    <property type="entry name" value="GIY-YIG"/>
    <property type="match status" value="1"/>
</dbReference>
<dbReference type="SUPFAM" id="SSF82771">
    <property type="entry name" value="GIY-YIG endonuclease"/>
    <property type="match status" value="1"/>
</dbReference>
<dbReference type="PROSITE" id="PS50164">
    <property type="entry name" value="GIY_YIG"/>
    <property type="match status" value="1"/>
</dbReference>
<feature type="chain" id="PRO_1000063675" description="UPF0213 protein NGO_1598">
    <location>
        <begin position="1"/>
        <end position="91"/>
    </location>
</feature>
<feature type="domain" description="GIY-YIG" evidence="1">
    <location>
        <begin position="4"/>
        <end position="83"/>
    </location>
</feature>
<evidence type="ECO:0000255" key="1">
    <source>
        <dbReference type="PROSITE-ProRule" id="PRU00977"/>
    </source>
</evidence>
<evidence type="ECO:0000305" key="2"/>
<proteinExistence type="inferred from homology"/>
<comment type="similarity">
    <text evidence="2">Belongs to the UPF0213 family.</text>
</comment>
<sequence>MNASNWSVYLILCENSAFYCGISPNPQQRLAIHTAGKGAKYTRVFKPVAMRIVAGGMDKGTALKQEIAVKKLTAAQKRQLWEQAEKMPSET</sequence>
<keyword id="KW-1185">Reference proteome</keyword>
<reference key="1">
    <citation type="submission" date="2003-03" db="EMBL/GenBank/DDBJ databases">
        <title>The complete genome sequence of Neisseria gonorrhoeae.</title>
        <authorList>
            <person name="Lewis L.A."/>
            <person name="Gillaspy A.F."/>
            <person name="McLaughlin R.E."/>
            <person name="Gipson M."/>
            <person name="Ducey T.F."/>
            <person name="Ownbey T."/>
            <person name="Hartman K."/>
            <person name="Nydick C."/>
            <person name="Carson M.B."/>
            <person name="Vaughn J."/>
            <person name="Thomson C."/>
            <person name="Song L."/>
            <person name="Lin S."/>
            <person name="Yuan X."/>
            <person name="Najar F."/>
            <person name="Zhan M."/>
            <person name="Ren Q."/>
            <person name="Zhu H."/>
            <person name="Qi S."/>
            <person name="Kenton S.M."/>
            <person name="Lai H."/>
            <person name="White J.D."/>
            <person name="Clifton S."/>
            <person name="Roe B.A."/>
            <person name="Dyer D.W."/>
        </authorList>
    </citation>
    <scope>NUCLEOTIDE SEQUENCE [LARGE SCALE GENOMIC DNA]</scope>
    <source>
        <strain>ATCC 700825 / FA 1090</strain>
    </source>
</reference>
<gene>
    <name type="ordered locus">NGO_1598</name>
</gene>
<protein>
    <recommendedName>
        <fullName>UPF0213 protein NGO_1598</fullName>
    </recommendedName>
</protein>